<feature type="chain" id="PRO_0000032665" description="Metal tolerance protein 1">
    <location>
        <begin position="1"/>
        <end position="398"/>
    </location>
</feature>
<feature type="chain" id="PRO_0000032666" description="Metal tolerance protein 1 short form" evidence="16">
    <location>
        <begin position="26"/>
        <end position="398"/>
    </location>
</feature>
<feature type="topological domain" description="Cytoplasmic" evidence="1">
    <location>
        <begin position="1"/>
        <end position="56"/>
    </location>
</feature>
<feature type="transmembrane region" description="Helical" evidence="1">
    <location>
        <begin position="57"/>
        <end position="77"/>
    </location>
</feature>
<feature type="topological domain" description="Vacuolar" evidence="1">
    <location>
        <begin position="78"/>
        <end position="89"/>
    </location>
</feature>
<feature type="transmembrane region" description="Helical" evidence="1">
    <location>
        <begin position="90"/>
        <end position="110"/>
    </location>
</feature>
<feature type="topological domain" description="Cytoplasmic" evidence="1">
    <location>
        <begin position="111"/>
        <end position="122"/>
    </location>
</feature>
<feature type="transmembrane region" description="Helical" evidence="1">
    <location>
        <begin position="123"/>
        <end position="143"/>
    </location>
</feature>
<feature type="topological domain" description="Vacuolar" evidence="1">
    <location>
        <begin position="144"/>
        <end position="159"/>
    </location>
</feature>
<feature type="transmembrane region" description="Helical" evidence="1">
    <location>
        <begin position="160"/>
        <end position="180"/>
    </location>
</feature>
<feature type="topological domain" description="Cytoplasmic" evidence="1">
    <location>
        <begin position="181"/>
        <end position="263"/>
    </location>
</feature>
<feature type="transmembrane region" description="Helical" evidence="1">
    <location>
        <begin position="264"/>
        <end position="284"/>
    </location>
</feature>
<feature type="topological domain" description="Vacuolar" evidence="1">
    <location>
        <begin position="285"/>
        <end position="290"/>
    </location>
</feature>
<feature type="transmembrane region" description="Helical" evidence="1">
    <location>
        <begin position="291"/>
        <end position="311"/>
    </location>
</feature>
<feature type="topological domain" description="Cytoplasmic" evidence="1">
    <location>
        <begin position="312"/>
        <end position="398"/>
    </location>
</feature>
<feature type="region of interest" description="Required for zinc-binding">
    <location>
        <begin position="182"/>
        <end position="232"/>
    </location>
</feature>
<feature type="region of interest" description="Disordered" evidence="2">
    <location>
        <begin position="186"/>
        <end position="232"/>
    </location>
</feature>
<feature type="compositionally biased region" description="Basic residues" evidence="2">
    <location>
        <begin position="187"/>
        <end position="202"/>
    </location>
</feature>
<feature type="compositionally biased region" description="Basic and acidic residues" evidence="2">
    <location>
        <begin position="216"/>
        <end position="232"/>
    </location>
</feature>
<feature type="mutagenesis site" description="Hypersensitivity to zinc Zn(2+)." evidence="8">
    <original>D</original>
    <variation>N</variation>
    <location>
        <position position="293"/>
    </location>
</feature>
<proteinExistence type="evidence at protein level"/>
<sequence>MESSSPHHSHIVEVNVGKSDEERIIVASKVCGEAPCGFSDSKNASGDAHERSASMRKLCIAVVLCLVFMSVEVVGGIKANSLAILTDAAHLLSDVAAFAISLFSLWAAGWEATPRQTYGFFRIEILGALVSIQLIWLLTGILVYEAIIRIVTETSEVNGFLMFLVAAFGLVVNIIMAVLLGHDHGHSHGHGHGHGHDHHNHSHGVTVTTHHHHHDHEHGHSHGHGEDKHHAHGDVTEQLLDKSKTQVAAKEKRKRNINLQGAYLHVLGDSIQSVGVMIGGAIIWYNPEWKIVDLICTLAFSVIVLGTTINMIRNILEVLMESTPREIDATKLEKGLLEMEEVVAVHELHIWAITVGKVLLACHVNIRPEADADMVLNKVIDYIRREYNISHVTIQIER</sequence>
<protein>
    <recommendedName>
        <fullName evidence="10 12 13 14">Metal tolerance protein 1</fullName>
        <shortName evidence="10 12 13 14">AtMTP1</shortName>
    </recommendedName>
    <alternativeName>
        <fullName evidence="15">Protein OVERLY ZINC SENSITIVE 1</fullName>
    </alternativeName>
    <alternativeName>
        <fullName evidence="9 11">Zinc transporter of Arabidopsis thaliana 1</fullName>
        <shortName evidence="9 11">ZAT1p</shortName>
        <shortName evidence="9 11">Zn transporter ZAT-1</shortName>
    </alternativeName>
    <component>
        <recommendedName>
            <fullName evidence="10 12 13">Metal tolerance protein 1 short form</fullName>
        </recommendedName>
    </component>
</protein>
<comment type="function">
    <text evidence="3 4 5 7 8">Mediates zinc accumulation in roots and confers resistance to zinc (PubMed:23826687). Involved in sequestration of excess zinc in the cytoplasm into vacuoles to maintain zinc homeostasis (PubMed:23826687). Can also transport cadmium with a low efficiency.</text>
</comment>
<comment type="subcellular location">
    <subcellularLocation>
        <location evidence="5 6">Vacuole membrane</location>
        <topology evidence="1 5">Multi-pass membrane protein</topology>
    </subcellularLocation>
    <text>Tonoplast.</text>
</comment>
<comment type="tissue specificity">
    <text evidence="3">Ubiquitously expressed at low levels.</text>
</comment>
<comment type="induction">
    <text evidence="7">By treatment with high concentrations of zinc.</text>
</comment>
<comment type="disruption phenotype">
    <text evidence="7">No visible phenotype under normal growth condition, but hypersensitivity to elevated levels of zinc.</text>
</comment>
<comment type="similarity">
    <text evidence="16">Belongs to the cation diffusion facilitator (CDF) transporter (TC 2.A.4) family. SLC30A subfamily.</text>
</comment>
<comment type="sequence caution" evidence="16">
    <conflict type="frameshift">
        <sequence resource="EMBL-CDS" id="AAD11757"/>
    </conflict>
</comment>
<accession>Q9ZT63</accession>
<accession>O81036</accession>
<keyword id="KW-0903">Direct protein sequencing</keyword>
<keyword id="KW-0406">Ion transport</keyword>
<keyword id="KW-0472">Membrane</keyword>
<keyword id="KW-0479">Metal-binding</keyword>
<keyword id="KW-1185">Reference proteome</keyword>
<keyword id="KW-0812">Transmembrane</keyword>
<keyword id="KW-1133">Transmembrane helix</keyword>
<keyword id="KW-0813">Transport</keyword>
<keyword id="KW-0926">Vacuole</keyword>
<keyword id="KW-0862">Zinc</keyword>
<keyword id="KW-0864">Zinc transport</keyword>
<evidence type="ECO:0000255" key="1"/>
<evidence type="ECO:0000256" key="2">
    <source>
        <dbReference type="SAM" id="MobiDB-lite"/>
    </source>
</evidence>
<evidence type="ECO:0000269" key="3">
    <source>
    </source>
</evidence>
<evidence type="ECO:0000269" key="4">
    <source>
    </source>
</evidence>
<evidence type="ECO:0000269" key="5">
    <source>
    </source>
</evidence>
<evidence type="ECO:0000269" key="6">
    <source>
    </source>
</evidence>
<evidence type="ECO:0000269" key="7">
    <source>
    </source>
</evidence>
<evidence type="ECO:0000269" key="8">
    <source>
    </source>
</evidence>
<evidence type="ECO:0000303" key="9">
    <source>
    </source>
</evidence>
<evidence type="ECO:0000303" key="10">
    <source>
    </source>
</evidence>
<evidence type="ECO:0000303" key="11">
    <source>
    </source>
</evidence>
<evidence type="ECO:0000303" key="12">
    <source>
    </source>
</evidence>
<evidence type="ECO:0000303" key="13">
    <source>
    </source>
</evidence>
<evidence type="ECO:0000303" key="14">
    <source>
    </source>
</evidence>
<evidence type="ECO:0000303" key="15">
    <source>
    </source>
</evidence>
<evidence type="ECO:0000305" key="16"/>
<evidence type="ECO:0000312" key="17">
    <source>
        <dbReference type="Araport" id="AT2G46800"/>
    </source>
</evidence>
<evidence type="ECO:0000312" key="18">
    <source>
        <dbReference type="EMBL" id="AAC33498.1"/>
    </source>
</evidence>
<gene>
    <name evidence="10 12 13 14" type="primary">MTP1</name>
    <name evidence="15" type="synonym">OZS1</name>
    <name evidence="10" type="synonym">ZAT</name>
    <name evidence="9 11" type="synonym">ZAT1</name>
    <name evidence="17" type="ordered locus">At2g46800</name>
    <name evidence="18" type="ORF">F19D11.8</name>
</gene>
<organism>
    <name type="scientific">Arabidopsis thaliana</name>
    <name type="common">Mouse-ear cress</name>
    <dbReference type="NCBI Taxonomy" id="3702"/>
    <lineage>
        <taxon>Eukaryota</taxon>
        <taxon>Viridiplantae</taxon>
        <taxon>Streptophyta</taxon>
        <taxon>Embryophyta</taxon>
        <taxon>Tracheophyta</taxon>
        <taxon>Spermatophyta</taxon>
        <taxon>Magnoliopsida</taxon>
        <taxon>eudicotyledons</taxon>
        <taxon>Gunneridae</taxon>
        <taxon>Pentapetalae</taxon>
        <taxon>rosids</taxon>
        <taxon>malvids</taxon>
        <taxon>Brassicales</taxon>
        <taxon>Brassicaceae</taxon>
        <taxon>Camelineae</taxon>
        <taxon>Arabidopsis</taxon>
    </lineage>
</organism>
<name>MTP1_ARATH</name>
<dbReference type="EMBL" id="AF072858">
    <property type="protein sequence ID" value="AAD11757.1"/>
    <property type="status" value="ALT_FRAME"/>
    <property type="molecule type" value="mRNA"/>
</dbReference>
<dbReference type="EMBL" id="AC005310">
    <property type="protein sequence ID" value="AAC33498.1"/>
    <property type="molecule type" value="Genomic_DNA"/>
</dbReference>
<dbReference type="EMBL" id="CP002685">
    <property type="protein sequence ID" value="AEC10755.1"/>
    <property type="molecule type" value="Genomic_DNA"/>
</dbReference>
<dbReference type="EMBL" id="CP002685">
    <property type="protein sequence ID" value="AEC10756.1"/>
    <property type="molecule type" value="Genomic_DNA"/>
</dbReference>
<dbReference type="EMBL" id="CP002685">
    <property type="protein sequence ID" value="ANM62436.1"/>
    <property type="molecule type" value="Genomic_DNA"/>
</dbReference>
<dbReference type="EMBL" id="CP002685">
    <property type="protein sequence ID" value="ANM62437.1"/>
    <property type="molecule type" value="Genomic_DNA"/>
</dbReference>
<dbReference type="EMBL" id="CP002685">
    <property type="protein sequence ID" value="ANM62438.1"/>
    <property type="molecule type" value="Genomic_DNA"/>
</dbReference>
<dbReference type="EMBL" id="AY086033">
    <property type="protein sequence ID" value="AAM63243.1"/>
    <property type="molecule type" value="mRNA"/>
</dbReference>
<dbReference type="PIR" id="T02681">
    <property type="entry name" value="T02681"/>
</dbReference>
<dbReference type="RefSeq" id="NP_001318436.1">
    <property type="nucleotide sequence ID" value="NM_001337215.1"/>
</dbReference>
<dbReference type="RefSeq" id="NP_001324594.1">
    <property type="nucleotide sequence ID" value="NM_001337217.1"/>
</dbReference>
<dbReference type="RefSeq" id="NP_001324595.1">
    <property type="nucleotide sequence ID" value="NM_001337216.1"/>
</dbReference>
<dbReference type="RefSeq" id="NP_182203.1">
    <property type="nucleotide sequence ID" value="NM_130246.3"/>
</dbReference>
<dbReference type="RefSeq" id="NP_850459.1">
    <property type="nucleotide sequence ID" value="NM_180128.3"/>
</dbReference>
<dbReference type="SMR" id="Q9ZT63"/>
<dbReference type="BioGRID" id="4628">
    <property type="interactions" value="13"/>
</dbReference>
<dbReference type="FunCoup" id="Q9ZT63">
    <property type="interactions" value="1055"/>
</dbReference>
<dbReference type="IntAct" id="Q9ZT63">
    <property type="interactions" value="10"/>
</dbReference>
<dbReference type="STRING" id="3702.Q9ZT63"/>
<dbReference type="TCDB" id="2.A.4.3.4">
    <property type="family name" value="the cation diffusion facilitator (cdf) family"/>
</dbReference>
<dbReference type="PaxDb" id="3702-AT2G46800.2"/>
<dbReference type="ProteomicsDB" id="250989"/>
<dbReference type="EnsemblPlants" id="AT2G46800.1">
    <property type="protein sequence ID" value="AT2G46800.1"/>
    <property type="gene ID" value="AT2G46800"/>
</dbReference>
<dbReference type="EnsemblPlants" id="AT2G46800.2">
    <property type="protein sequence ID" value="AT2G46800.2"/>
    <property type="gene ID" value="AT2G46800"/>
</dbReference>
<dbReference type="EnsemblPlants" id="AT2G46800.3">
    <property type="protein sequence ID" value="AT2G46800.3"/>
    <property type="gene ID" value="AT2G46800"/>
</dbReference>
<dbReference type="EnsemblPlants" id="AT2G46800.4">
    <property type="protein sequence ID" value="AT2G46800.4"/>
    <property type="gene ID" value="AT2G46800"/>
</dbReference>
<dbReference type="EnsemblPlants" id="AT2G46800.5">
    <property type="protein sequence ID" value="AT2G46800.5"/>
    <property type="gene ID" value="AT2G46800"/>
</dbReference>
<dbReference type="GeneID" id="819293"/>
<dbReference type="Gramene" id="AT2G46800.1">
    <property type="protein sequence ID" value="AT2G46800.1"/>
    <property type="gene ID" value="AT2G46800"/>
</dbReference>
<dbReference type="Gramene" id="AT2G46800.2">
    <property type="protein sequence ID" value="AT2G46800.2"/>
    <property type="gene ID" value="AT2G46800"/>
</dbReference>
<dbReference type="Gramene" id="AT2G46800.3">
    <property type="protein sequence ID" value="AT2G46800.3"/>
    <property type="gene ID" value="AT2G46800"/>
</dbReference>
<dbReference type="Gramene" id="AT2G46800.4">
    <property type="protein sequence ID" value="AT2G46800.4"/>
    <property type="gene ID" value="AT2G46800"/>
</dbReference>
<dbReference type="Gramene" id="AT2G46800.5">
    <property type="protein sequence ID" value="AT2G46800.5"/>
    <property type="gene ID" value="AT2G46800"/>
</dbReference>
<dbReference type="KEGG" id="ath:AT2G46800"/>
<dbReference type="Araport" id="AT2G46800"/>
<dbReference type="TAIR" id="AT2G46800">
    <property type="gene designation" value="ZAT"/>
</dbReference>
<dbReference type="eggNOG" id="KOG1482">
    <property type="taxonomic scope" value="Eukaryota"/>
</dbReference>
<dbReference type="HOGENOM" id="CLU_013430_0_1_1"/>
<dbReference type="InParanoid" id="Q9ZT63"/>
<dbReference type="OMA" id="GHEKMLH"/>
<dbReference type="OrthoDB" id="9944568at2759"/>
<dbReference type="PhylomeDB" id="Q9ZT63"/>
<dbReference type="PRO" id="PR:Q9ZT63"/>
<dbReference type="Proteomes" id="UP000006548">
    <property type="component" value="Chromosome 2"/>
</dbReference>
<dbReference type="ExpressionAtlas" id="Q9ZT63">
    <property type="expression patterns" value="baseline and differential"/>
</dbReference>
<dbReference type="GO" id="GO:0016020">
    <property type="term" value="C:membrane"/>
    <property type="evidence" value="ECO:0000314"/>
    <property type="project" value="TAIR"/>
</dbReference>
<dbReference type="GO" id="GO:0000325">
    <property type="term" value="C:plant-type vacuole"/>
    <property type="evidence" value="ECO:0007005"/>
    <property type="project" value="TAIR"/>
</dbReference>
<dbReference type="GO" id="GO:0005774">
    <property type="term" value="C:vacuolar membrane"/>
    <property type="evidence" value="ECO:0000314"/>
    <property type="project" value="TAIR"/>
</dbReference>
<dbReference type="GO" id="GO:0005773">
    <property type="term" value="C:vacuole"/>
    <property type="evidence" value="ECO:0007005"/>
    <property type="project" value="TAIR"/>
</dbReference>
<dbReference type="GO" id="GO:0046872">
    <property type="term" value="F:metal ion binding"/>
    <property type="evidence" value="ECO:0007669"/>
    <property type="project" value="UniProtKB-KW"/>
</dbReference>
<dbReference type="GO" id="GO:0046873">
    <property type="term" value="F:metal ion transmembrane transporter activity"/>
    <property type="evidence" value="ECO:0000314"/>
    <property type="project" value="TAIR"/>
</dbReference>
<dbReference type="GO" id="GO:0140486">
    <property type="term" value="F:zinc ion sequestering activity"/>
    <property type="evidence" value="ECO:0000315"/>
    <property type="project" value="UniProtKB"/>
</dbReference>
<dbReference type="GO" id="GO:0005385">
    <property type="term" value="F:zinc ion transmembrane transporter activity"/>
    <property type="evidence" value="ECO:0000314"/>
    <property type="project" value="TAIR"/>
</dbReference>
<dbReference type="GO" id="GO:0006882">
    <property type="term" value="P:intracellular zinc ion homeostasis"/>
    <property type="evidence" value="ECO:0000304"/>
    <property type="project" value="TAIR"/>
</dbReference>
<dbReference type="GO" id="GO:0010043">
    <property type="term" value="P:response to zinc ion"/>
    <property type="evidence" value="ECO:0000315"/>
    <property type="project" value="UniProtKB"/>
</dbReference>
<dbReference type="GO" id="GO:0006829">
    <property type="term" value="P:zinc ion transport"/>
    <property type="evidence" value="ECO:0000314"/>
    <property type="project" value="TAIR"/>
</dbReference>
<dbReference type="Gene3D" id="1.20.1510.10">
    <property type="entry name" value="Cation efflux protein transmembrane domain"/>
    <property type="match status" value="1"/>
</dbReference>
<dbReference type="InterPro" id="IPR002524">
    <property type="entry name" value="Cation_efflux"/>
</dbReference>
<dbReference type="InterPro" id="IPR036837">
    <property type="entry name" value="Cation_efflux_CTD_sf"/>
</dbReference>
<dbReference type="InterPro" id="IPR027469">
    <property type="entry name" value="Cation_efflux_TMD_sf"/>
</dbReference>
<dbReference type="InterPro" id="IPR050681">
    <property type="entry name" value="CDF/SLC30A"/>
</dbReference>
<dbReference type="NCBIfam" id="TIGR01297">
    <property type="entry name" value="CDF"/>
    <property type="match status" value="1"/>
</dbReference>
<dbReference type="PANTHER" id="PTHR11562">
    <property type="entry name" value="CATION EFFLUX PROTEIN/ ZINC TRANSPORTER"/>
    <property type="match status" value="1"/>
</dbReference>
<dbReference type="PANTHER" id="PTHR11562:SF88">
    <property type="entry name" value="METAL TOLERANCE PROTEIN 1"/>
    <property type="match status" value="1"/>
</dbReference>
<dbReference type="Pfam" id="PF01545">
    <property type="entry name" value="Cation_efflux"/>
    <property type="match status" value="1"/>
</dbReference>
<dbReference type="SUPFAM" id="SSF160240">
    <property type="entry name" value="Cation efflux protein cytoplasmic domain-like"/>
    <property type="match status" value="1"/>
</dbReference>
<dbReference type="SUPFAM" id="SSF161111">
    <property type="entry name" value="Cation efflux protein transmembrane domain-like"/>
    <property type="match status" value="1"/>
</dbReference>
<reference key="1">
    <citation type="journal article" date="1999" name="Plant Physiol.">
        <title>Overexpression of a novel Arabidopsis gene related to putative zinc-transporter genes from animals can lead to enhanced zinc resistance and accumulation.</title>
        <authorList>
            <person name="Van der Zaal B.J."/>
            <person name="Neuteboom L.W."/>
            <person name="Pinas J.E."/>
            <person name="Chardonnens A.N."/>
            <person name="Schat H."/>
            <person name="Verkleij J.A.C."/>
            <person name="Hooykaas P.J.J."/>
        </authorList>
    </citation>
    <scope>NUCLEOTIDE SEQUENCE [MRNA]</scope>
    <scope>FUNCTION</scope>
    <scope>TISSUE SPECIFICITY</scope>
    <source>
        <strain>cv. C24</strain>
    </source>
</reference>
<reference key="2">
    <citation type="journal article" date="1999" name="Nature">
        <title>Sequence and analysis of chromosome 2 of the plant Arabidopsis thaliana.</title>
        <authorList>
            <person name="Lin X."/>
            <person name="Kaul S."/>
            <person name="Rounsley S.D."/>
            <person name="Shea T.P."/>
            <person name="Benito M.-I."/>
            <person name="Town C.D."/>
            <person name="Fujii C.Y."/>
            <person name="Mason T.M."/>
            <person name="Bowman C.L."/>
            <person name="Barnstead M.E."/>
            <person name="Feldblyum T.V."/>
            <person name="Buell C.R."/>
            <person name="Ketchum K.A."/>
            <person name="Lee J.J."/>
            <person name="Ronning C.M."/>
            <person name="Koo H.L."/>
            <person name="Moffat K.S."/>
            <person name="Cronin L.A."/>
            <person name="Shen M."/>
            <person name="Pai G."/>
            <person name="Van Aken S."/>
            <person name="Umayam L."/>
            <person name="Tallon L.J."/>
            <person name="Gill J.E."/>
            <person name="Adams M.D."/>
            <person name="Carrera A.J."/>
            <person name="Creasy T.H."/>
            <person name="Goodman H.M."/>
            <person name="Somerville C.R."/>
            <person name="Copenhaver G.P."/>
            <person name="Preuss D."/>
            <person name="Nierman W.C."/>
            <person name="White O."/>
            <person name="Eisen J.A."/>
            <person name="Salzberg S.L."/>
            <person name="Fraser C.M."/>
            <person name="Venter J.C."/>
        </authorList>
    </citation>
    <scope>NUCLEOTIDE SEQUENCE [LARGE SCALE GENOMIC DNA]</scope>
    <source>
        <strain>cv. Columbia</strain>
    </source>
</reference>
<reference key="3">
    <citation type="journal article" date="2017" name="Plant J.">
        <title>Araport11: a complete reannotation of the Arabidopsis thaliana reference genome.</title>
        <authorList>
            <person name="Cheng C.Y."/>
            <person name="Krishnakumar V."/>
            <person name="Chan A.P."/>
            <person name="Thibaud-Nissen F."/>
            <person name="Schobel S."/>
            <person name="Town C.D."/>
        </authorList>
    </citation>
    <scope>GENOME REANNOTATION</scope>
    <source>
        <strain>cv. Columbia</strain>
    </source>
</reference>
<reference key="4">
    <citation type="submission" date="2002-03" db="EMBL/GenBank/DDBJ databases">
        <title>Full-length cDNA from Arabidopsis thaliana.</title>
        <authorList>
            <person name="Brover V.V."/>
            <person name="Troukhan M.E."/>
            <person name="Alexandrov N.A."/>
            <person name="Lu Y.-P."/>
            <person name="Flavell R.B."/>
            <person name="Feldmann K.A."/>
        </authorList>
    </citation>
    <scope>NUCLEOTIDE SEQUENCE [LARGE SCALE MRNA]</scope>
</reference>
<reference key="5">
    <citation type="journal article" date="2002" name="Planta">
        <title>Characterization of the ZAT1p zinc transporter from Arabidopsis thaliana in microbial model organisms and reconstituted proteoliposomes.</title>
        <authorList>
            <person name="Bloss T."/>
            <person name="Clemens S."/>
            <person name="Nies D.H."/>
        </authorList>
    </citation>
    <scope>PROTEIN SEQUENCE OF N-TERMINUS</scope>
    <scope>FUNCTION</scope>
</reference>
<reference key="6">
    <citation type="journal article" date="2001" name="Plant Physiol.">
        <title>Phylogenetic relationships within cation transporter families of Arabidopsis.</title>
        <authorList>
            <person name="Maeser P."/>
            <person name="Thomine S."/>
            <person name="Schroeder J.I."/>
            <person name="Ward J.M."/>
            <person name="Hirschi K."/>
            <person name="Sze H."/>
            <person name="Talke I.N."/>
            <person name="Amtmann A."/>
            <person name="Maathuis F.J.M."/>
            <person name="Sanders D."/>
            <person name="Harper J.F."/>
            <person name="Tchieu J."/>
            <person name="Gribskov M."/>
            <person name="Persans M.W."/>
            <person name="Salt D.E."/>
            <person name="Kim S.A."/>
            <person name="Guerinot M.L."/>
        </authorList>
    </citation>
    <scope>GENE FAMILY</scope>
    <scope>NOMENCLATURE</scope>
</reference>
<reference key="7">
    <citation type="journal article" date="2004" name="Plant Cell Physiol.">
        <title>Zinc transporter of Arabidopsis thaliana AtMTP1 is localized to vacuolar membranes and implicated in zinc homeostasis.</title>
        <authorList>
            <person name="Kobae Y."/>
            <person name="Uemura T."/>
            <person name="Sato M.H."/>
            <person name="Ohnishi M."/>
            <person name="Mimura T."/>
            <person name="Nakagawa T."/>
            <person name="Maeshima M."/>
        </authorList>
    </citation>
    <scope>FUNCTION</scope>
    <scope>SUBCELLULAR LOCATION</scope>
    <scope>NOMENCLATURE</scope>
</reference>
<reference key="8">
    <citation type="journal article" date="2005" name="Trends Plant Sci.">
        <title>MTP1 mops up excess zinc in Arabidopsis cells.</title>
        <authorList>
            <person name="Kraemer U."/>
        </authorList>
    </citation>
    <scope>REVIEW</scope>
</reference>
<reference key="9">
    <citation type="journal article" date="2007" name="Mol. Cell. Proteomics">
        <title>A proteomics dissection of Arabidopsis thaliana vacuoles isolated from cell culture.</title>
        <authorList>
            <person name="Jaquinod M."/>
            <person name="Villiers F."/>
            <person name="Kieffer-Jaquinod S."/>
            <person name="Hugouvieux V."/>
            <person name="Bruley C."/>
            <person name="Garin J."/>
            <person name="Bourguignon J."/>
        </authorList>
    </citation>
    <scope>IDENTIFICATION BY MASS SPECTROMETRY</scope>
    <scope>SUBCELLULAR LOCATION [LARGE SCALE ANALYSIS]</scope>
</reference>
<reference key="10">
    <citation type="journal article" date="2009" name="Plant Cell Physiol.">
        <title>A mutant strain Arabidopsis thaliana that lacks vacuolar membrane zinc transporter MTP1 revealed the latent tolerance to excessive zinc.</title>
        <authorList>
            <person name="Kawachi M."/>
            <person name="Kobae Y."/>
            <person name="Mori H."/>
            <person name="Tomioka R."/>
            <person name="Lee Y."/>
            <person name="Maeshima M."/>
        </authorList>
    </citation>
    <scope>FUNCTION</scope>
    <scope>INDUCTION BY ZINC</scope>
    <scope>DISRUPTION PHENOTYPE</scope>
</reference>
<reference key="11">
    <citation type="journal article" date="2013" name="Plant J.">
        <title>A mutation in the Arabidopsis thaliana cell wall biosynthesis gene pectin methylesterase 3 as well as its aberrant expression cause hypersensitivity specifically to Zn.</title>
        <authorList>
            <person name="Weber M."/>
            <person name="Deinlein U."/>
            <person name="Fischer S."/>
            <person name="Rogowski M."/>
            <person name="Geimer S."/>
            <person name="Tenhaken R."/>
            <person name="Clemens S."/>
        </authorList>
    </citation>
    <scope>FUNCTION</scope>
    <scope>MUTAGENESIS OF ASP-293</scope>
    <source>
        <strain>cv. Columbia</strain>
    </source>
</reference>